<reference key="1">
    <citation type="journal article" date="2009" name="PLoS Genet.">
        <title>Organised genome dynamics in the Escherichia coli species results in highly diverse adaptive paths.</title>
        <authorList>
            <person name="Touchon M."/>
            <person name="Hoede C."/>
            <person name="Tenaillon O."/>
            <person name="Barbe V."/>
            <person name="Baeriswyl S."/>
            <person name="Bidet P."/>
            <person name="Bingen E."/>
            <person name="Bonacorsi S."/>
            <person name="Bouchier C."/>
            <person name="Bouvet O."/>
            <person name="Calteau A."/>
            <person name="Chiapello H."/>
            <person name="Clermont O."/>
            <person name="Cruveiller S."/>
            <person name="Danchin A."/>
            <person name="Diard M."/>
            <person name="Dossat C."/>
            <person name="Karoui M.E."/>
            <person name="Frapy E."/>
            <person name="Garry L."/>
            <person name="Ghigo J.M."/>
            <person name="Gilles A.M."/>
            <person name="Johnson J."/>
            <person name="Le Bouguenec C."/>
            <person name="Lescat M."/>
            <person name="Mangenot S."/>
            <person name="Martinez-Jehanne V."/>
            <person name="Matic I."/>
            <person name="Nassif X."/>
            <person name="Oztas S."/>
            <person name="Petit M.A."/>
            <person name="Pichon C."/>
            <person name="Rouy Z."/>
            <person name="Ruf C.S."/>
            <person name="Schneider D."/>
            <person name="Tourret J."/>
            <person name="Vacherie B."/>
            <person name="Vallenet D."/>
            <person name="Medigue C."/>
            <person name="Rocha E.P.C."/>
            <person name="Denamur E."/>
        </authorList>
    </citation>
    <scope>NUCLEOTIDE SEQUENCE [LARGE SCALE GENOMIC DNA]</scope>
    <source>
        <strain>IAI39 / ExPEC</strain>
    </source>
</reference>
<proteinExistence type="inferred from homology"/>
<comment type="function">
    <text evidence="1">Modulates RecA activity.</text>
</comment>
<comment type="subcellular location">
    <subcellularLocation>
        <location evidence="1">Cytoplasm</location>
    </subcellularLocation>
</comment>
<comment type="similarity">
    <text evidence="1">Belongs to the RecX family.</text>
</comment>
<protein>
    <recommendedName>
        <fullName evidence="1">Regulatory protein RecX</fullName>
    </recommendedName>
</protein>
<accession>B7NSH8</accession>
<feature type="chain" id="PRO_1000137162" description="Regulatory protein RecX">
    <location>
        <begin position="1"/>
        <end position="166"/>
    </location>
</feature>
<dbReference type="EMBL" id="CU928164">
    <property type="protein sequence ID" value="CAR19005.1"/>
    <property type="molecule type" value="Genomic_DNA"/>
</dbReference>
<dbReference type="RefSeq" id="WP_000140496.1">
    <property type="nucleotide sequence ID" value="NC_011750.1"/>
</dbReference>
<dbReference type="RefSeq" id="YP_002408817.1">
    <property type="nucleotide sequence ID" value="NC_011750.1"/>
</dbReference>
<dbReference type="SMR" id="B7NSH8"/>
<dbReference type="STRING" id="585057.ECIAI39_2884"/>
<dbReference type="KEGG" id="ect:ECIAI39_2884"/>
<dbReference type="PATRIC" id="fig|585057.6.peg.2992"/>
<dbReference type="HOGENOM" id="CLU_066607_3_2_6"/>
<dbReference type="Proteomes" id="UP000000749">
    <property type="component" value="Chromosome"/>
</dbReference>
<dbReference type="GO" id="GO:0005737">
    <property type="term" value="C:cytoplasm"/>
    <property type="evidence" value="ECO:0007669"/>
    <property type="project" value="UniProtKB-SubCell"/>
</dbReference>
<dbReference type="GO" id="GO:0006282">
    <property type="term" value="P:regulation of DNA repair"/>
    <property type="evidence" value="ECO:0007669"/>
    <property type="project" value="UniProtKB-UniRule"/>
</dbReference>
<dbReference type="FunFam" id="1.10.10.10:FF:000133">
    <property type="entry name" value="Regulatory protein RecX"/>
    <property type="match status" value="1"/>
</dbReference>
<dbReference type="FunFam" id="1.10.10.10:FF:000134">
    <property type="entry name" value="Regulatory protein RecX"/>
    <property type="match status" value="1"/>
</dbReference>
<dbReference type="FunFam" id="1.10.10.10:FF:000209">
    <property type="entry name" value="Regulatory protein RecX"/>
    <property type="match status" value="1"/>
</dbReference>
<dbReference type="Gene3D" id="1.10.10.10">
    <property type="entry name" value="Winged helix-like DNA-binding domain superfamily/Winged helix DNA-binding domain"/>
    <property type="match status" value="3"/>
</dbReference>
<dbReference type="HAMAP" id="MF_01114">
    <property type="entry name" value="RecX"/>
    <property type="match status" value="1"/>
</dbReference>
<dbReference type="InterPro" id="IPR053924">
    <property type="entry name" value="RecX_HTH_2nd"/>
</dbReference>
<dbReference type="InterPro" id="IPR053925">
    <property type="entry name" value="RecX_HTH_3rd"/>
</dbReference>
<dbReference type="InterPro" id="IPR003783">
    <property type="entry name" value="Regulatory_RecX"/>
</dbReference>
<dbReference type="InterPro" id="IPR036388">
    <property type="entry name" value="WH-like_DNA-bd_sf"/>
</dbReference>
<dbReference type="NCBIfam" id="NF001052">
    <property type="entry name" value="PRK00117.1-1"/>
    <property type="match status" value="1"/>
</dbReference>
<dbReference type="PANTHER" id="PTHR33602">
    <property type="entry name" value="REGULATORY PROTEIN RECX FAMILY PROTEIN"/>
    <property type="match status" value="1"/>
</dbReference>
<dbReference type="PANTHER" id="PTHR33602:SF1">
    <property type="entry name" value="REGULATORY PROTEIN RECX FAMILY PROTEIN"/>
    <property type="match status" value="1"/>
</dbReference>
<dbReference type="Pfam" id="PF02631">
    <property type="entry name" value="RecX_HTH2"/>
    <property type="match status" value="1"/>
</dbReference>
<dbReference type="Pfam" id="PF21981">
    <property type="entry name" value="RecX_HTH3"/>
    <property type="match status" value="1"/>
</dbReference>
<organism>
    <name type="scientific">Escherichia coli O7:K1 (strain IAI39 / ExPEC)</name>
    <dbReference type="NCBI Taxonomy" id="585057"/>
    <lineage>
        <taxon>Bacteria</taxon>
        <taxon>Pseudomonadati</taxon>
        <taxon>Pseudomonadota</taxon>
        <taxon>Gammaproteobacteria</taxon>
        <taxon>Enterobacterales</taxon>
        <taxon>Enterobacteriaceae</taxon>
        <taxon>Escherichia</taxon>
    </lineage>
</organism>
<name>RECX_ECO7I</name>
<evidence type="ECO:0000255" key="1">
    <source>
        <dbReference type="HAMAP-Rule" id="MF_01114"/>
    </source>
</evidence>
<gene>
    <name evidence="1" type="primary">recX</name>
    <name type="ordered locus">ECIAI39_2884</name>
</gene>
<sequence>MTESTSRRPAYARLLDRAARILAVRDHSEQELRRKLAAPIMGKNGPEEIDATAEDYERVIAWCHEHGYLDDSRFVARFIASRSRKGYGPARIRQELNQKGISREATEKAMRECDIDWCALARDQATRKYGEPLPTVFSEKVKIQRFLLYRGYLMEDIQDIWRNFAD</sequence>
<keyword id="KW-0963">Cytoplasm</keyword>